<reference key="1">
    <citation type="journal article" date="2001" name="Nature">
        <title>Complete genome sequence of Salmonella enterica serovar Typhimurium LT2.</title>
        <authorList>
            <person name="McClelland M."/>
            <person name="Sanderson K.E."/>
            <person name="Spieth J."/>
            <person name="Clifton S.W."/>
            <person name="Latreille P."/>
            <person name="Courtney L."/>
            <person name="Porwollik S."/>
            <person name="Ali J."/>
            <person name="Dante M."/>
            <person name="Du F."/>
            <person name="Hou S."/>
            <person name="Layman D."/>
            <person name="Leonard S."/>
            <person name="Nguyen C."/>
            <person name="Scott K."/>
            <person name="Holmes A."/>
            <person name="Grewal N."/>
            <person name="Mulvaney E."/>
            <person name="Ryan E."/>
            <person name="Sun H."/>
            <person name="Florea L."/>
            <person name="Miller W."/>
            <person name="Stoneking T."/>
            <person name="Nhan M."/>
            <person name="Waterston R."/>
            <person name="Wilson R.K."/>
        </authorList>
    </citation>
    <scope>NUCLEOTIDE SEQUENCE [LARGE SCALE GENOMIC DNA]</scope>
    <source>
        <strain>LT2 / SGSC1412 / ATCC 700720</strain>
    </source>
</reference>
<reference key="2">
    <citation type="journal article" date="1990" name="Biochem. Biophys. Res. Commun.">
        <title>Primary structure and expression of the Ssc-protein of Salmonella typhimurium.</title>
        <authorList>
            <person name="Hirvas L."/>
            <person name="Koski P."/>
            <person name="Vaara M."/>
        </authorList>
    </citation>
    <scope>NUCLEOTIDE SEQUENCE [GENOMIC DNA] OF 1-134</scope>
</reference>
<reference key="3">
    <citation type="journal article" date="1991" name="Biochem. Biophys. Res. Commun.">
        <authorList>
            <person name="Hirvas L."/>
            <person name="Koski P."/>
            <person name="Vaara M."/>
        </authorList>
    </citation>
    <scope>ERRATUM OF PUBMED:2256935</scope>
</reference>
<keyword id="KW-0963">Cytoplasm</keyword>
<keyword id="KW-0441">Lipid A biosynthesis</keyword>
<keyword id="KW-0444">Lipid biosynthesis</keyword>
<keyword id="KW-0443">Lipid metabolism</keyword>
<keyword id="KW-0456">Lyase</keyword>
<keyword id="KW-1185">Reference proteome</keyword>
<name>FABZ_SALTY</name>
<proteinExistence type="inferred from homology"/>
<sequence length="151" mass="16999">MTTNTHTLQIEEILELLPHRFPFLLVDRVLDFEEGRFLRAVKNVSVNEPFFQGHFPGKPILPGVLILEAMAQATGILAFKSVGKLEPGELYYFAGIDEARFKRPVVPGDQMIMEVTFEKTRRGLTRFKGVALVDGKVVCEATMMCARSREA</sequence>
<feature type="chain" id="PRO_0000091726" description="3-hydroxyacyl-[acyl-carrier-protein] dehydratase FabZ">
    <location>
        <begin position="1"/>
        <end position="151"/>
    </location>
</feature>
<feature type="active site" evidence="1">
    <location>
        <position position="54"/>
    </location>
</feature>
<accession>P0A1H9</accession>
<accession>P21773</accession>
<organism>
    <name type="scientific">Salmonella typhimurium (strain LT2 / SGSC1412 / ATCC 700720)</name>
    <dbReference type="NCBI Taxonomy" id="99287"/>
    <lineage>
        <taxon>Bacteria</taxon>
        <taxon>Pseudomonadati</taxon>
        <taxon>Pseudomonadota</taxon>
        <taxon>Gammaproteobacteria</taxon>
        <taxon>Enterobacterales</taxon>
        <taxon>Enterobacteriaceae</taxon>
        <taxon>Salmonella</taxon>
    </lineage>
</organism>
<protein>
    <recommendedName>
        <fullName>3-hydroxyacyl-[acyl-carrier-protein] dehydratase FabZ</fullName>
        <ecNumber>4.2.1.59</ecNumber>
    </recommendedName>
    <alternativeName>
        <fullName>(3R)-hydroxymyristoyl-[acyl-carrier-protein] dehydratase</fullName>
        <shortName>(3R)-hydroxymyristoyl-ACP dehydrase</shortName>
    </alternativeName>
    <alternativeName>
        <fullName>Beta-hydroxyacyl-ACP dehydratase</fullName>
    </alternativeName>
</protein>
<comment type="function">
    <text evidence="1">Involved in unsaturated fatty acids biosynthesis. Catalyzes the dehydration of short chain beta-hydroxyacyl-ACPs and long chain saturated and unsaturated beta-hydroxyacyl-ACPs (By similarity).</text>
</comment>
<comment type="catalytic activity">
    <reaction>
        <text>a (3R)-hydroxyacyl-[ACP] = a (2E)-enoyl-[ACP] + H2O</text>
        <dbReference type="Rhea" id="RHEA:13097"/>
        <dbReference type="Rhea" id="RHEA-COMP:9925"/>
        <dbReference type="Rhea" id="RHEA-COMP:9945"/>
        <dbReference type="ChEBI" id="CHEBI:15377"/>
        <dbReference type="ChEBI" id="CHEBI:78784"/>
        <dbReference type="ChEBI" id="CHEBI:78827"/>
        <dbReference type="EC" id="4.2.1.59"/>
    </reaction>
</comment>
<comment type="subcellular location">
    <subcellularLocation>
        <location evidence="1">Cytoplasm</location>
    </subcellularLocation>
</comment>
<comment type="similarity">
    <text evidence="2">Belongs to the thioester dehydratase family. FabZ subfamily.</text>
</comment>
<dbReference type="EC" id="4.2.1.59"/>
<dbReference type="EMBL" id="AE006468">
    <property type="protein sequence ID" value="AAL19191.1"/>
    <property type="molecule type" value="Genomic_DNA"/>
</dbReference>
<dbReference type="EMBL" id="M35193">
    <property type="status" value="NOT_ANNOTATED_CDS"/>
    <property type="molecule type" value="Genomic_DNA"/>
</dbReference>
<dbReference type="PIR" id="C37083">
    <property type="entry name" value="C37083"/>
</dbReference>
<dbReference type="RefSeq" id="NP_459232.1">
    <property type="nucleotide sequence ID" value="NC_003197.2"/>
</dbReference>
<dbReference type="RefSeq" id="WP_000210741.1">
    <property type="nucleotide sequence ID" value="NC_003197.2"/>
</dbReference>
<dbReference type="SMR" id="P0A1H9"/>
<dbReference type="STRING" id="99287.STM0227"/>
<dbReference type="PaxDb" id="99287-STM0227"/>
<dbReference type="GeneID" id="1251745"/>
<dbReference type="GeneID" id="66754751"/>
<dbReference type="KEGG" id="stm:STM0227"/>
<dbReference type="PATRIC" id="fig|99287.12.peg.240"/>
<dbReference type="HOGENOM" id="CLU_078912_1_0_6"/>
<dbReference type="PhylomeDB" id="P0A1H9"/>
<dbReference type="BioCyc" id="SENT99287:STM0227-MONOMER"/>
<dbReference type="Proteomes" id="UP000001014">
    <property type="component" value="Chromosome"/>
</dbReference>
<dbReference type="GO" id="GO:0005737">
    <property type="term" value="C:cytoplasm"/>
    <property type="evidence" value="ECO:0007669"/>
    <property type="project" value="UniProtKB-SubCell"/>
</dbReference>
<dbReference type="GO" id="GO:0016020">
    <property type="term" value="C:membrane"/>
    <property type="evidence" value="ECO:0007669"/>
    <property type="project" value="GOC"/>
</dbReference>
<dbReference type="GO" id="GO:0019171">
    <property type="term" value="F:(3R)-hydroxyacyl-[acyl-carrier-protein] dehydratase activity"/>
    <property type="evidence" value="ECO:0007669"/>
    <property type="project" value="UniProtKB-EC"/>
</dbReference>
<dbReference type="GO" id="GO:0006633">
    <property type="term" value="P:fatty acid biosynthetic process"/>
    <property type="evidence" value="ECO:0007669"/>
    <property type="project" value="UniProtKB-UniRule"/>
</dbReference>
<dbReference type="GO" id="GO:0009245">
    <property type="term" value="P:lipid A biosynthetic process"/>
    <property type="evidence" value="ECO:0007669"/>
    <property type="project" value="UniProtKB-UniRule"/>
</dbReference>
<dbReference type="CDD" id="cd01288">
    <property type="entry name" value="FabZ"/>
    <property type="match status" value="1"/>
</dbReference>
<dbReference type="FunFam" id="3.10.129.10:FF:000001">
    <property type="entry name" value="3-hydroxyacyl-[acyl-carrier-protein] dehydratase FabZ"/>
    <property type="match status" value="1"/>
</dbReference>
<dbReference type="Gene3D" id="3.10.129.10">
    <property type="entry name" value="Hotdog Thioesterase"/>
    <property type="match status" value="1"/>
</dbReference>
<dbReference type="HAMAP" id="MF_00406">
    <property type="entry name" value="FabZ"/>
    <property type="match status" value="1"/>
</dbReference>
<dbReference type="InterPro" id="IPR013114">
    <property type="entry name" value="FabA_FabZ"/>
</dbReference>
<dbReference type="InterPro" id="IPR010084">
    <property type="entry name" value="FabZ"/>
</dbReference>
<dbReference type="InterPro" id="IPR029069">
    <property type="entry name" value="HotDog_dom_sf"/>
</dbReference>
<dbReference type="NCBIfam" id="TIGR01750">
    <property type="entry name" value="fabZ"/>
    <property type="match status" value="1"/>
</dbReference>
<dbReference type="NCBIfam" id="NF000582">
    <property type="entry name" value="PRK00006.1"/>
    <property type="match status" value="1"/>
</dbReference>
<dbReference type="PANTHER" id="PTHR30272">
    <property type="entry name" value="3-HYDROXYACYL-[ACYL-CARRIER-PROTEIN] DEHYDRATASE"/>
    <property type="match status" value="1"/>
</dbReference>
<dbReference type="PANTHER" id="PTHR30272:SF1">
    <property type="entry name" value="3-HYDROXYACYL-[ACYL-CARRIER-PROTEIN] DEHYDRATASE"/>
    <property type="match status" value="1"/>
</dbReference>
<dbReference type="Pfam" id="PF07977">
    <property type="entry name" value="FabA"/>
    <property type="match status" value="1"/>
</dbReference>
<dbReference type="SUPFAM" id="SSF54637">
    <property type="entry name" value="Thioesterase/thiol ester dehydrase-isomerase"/>
    <property type="match status" value="1"/>
</dbReference>
<evidence type="ECO:0000250" key="1"/>
<evidence type="ECO:0000305" key="2"/>
<gene>
    <name type="primary">fabZ</name>
    <name type="ordered locus">STM0227</name>
</gene>